<sequence length="188" mass="20623">MATYYSNDFRSGLKIMLDGEPYAVESSEFVKPGKGQAFARVKLRRLLTGTRVEKTFKSTDSAEGADVVDMNLTYLYNDGEFWHFMNNETFEQLSADAKAIGDNAKWLLDQAECIVTLWNGQPISVTPPNFVELEIVDTDPGLKGDTAGTGGKPATLSTGAVVKVPLFVQIGEVIKVDTRSGEYVSRVK</sequence>
<comment type="function">
    <text evidence="1">Involved in peptide bond synthesis. Alleviates ribosome stalling that occurs when 3 or more consecutive Pro residues or the sequence PPG is present in a protein, possibly by augmenting the peptidyl transferase activity of the ribosome. Modification of Lys-34 is required for alleviation.</text>
</comment>
<comment type="pathway">
    <text evidence="1">Protein biosynthesis; polypeptide chain elongation.</text>
</comment>
<comment type="subcellular location">
    <subcellularLocation>
        <location evidence="1">Cytoplasm</location>
    </subcellularLocation>
</comment>
<comment type="PTM">
    <text evidence="1">Is beta-lysylated on the epsilon-amino group of Lys-34 by the combined action of EpmA and EpmB, and then hydroxylated on the C5 position of the same residue by EpmC. Lysylation is critical for the stimulatory effect of EF-P on peptide-bond formation. The lysylation moiety would extend toward the peptidyltransferase center and stabilize the terminal 3-CCA end of the tRNA. The hydroxylation of the C5 position on Lys-34 would allow additional potential stabilizing hydrogen-bond interactions with the P-tRNA.</text>
</comment>
<comment type="similarity">
    <text evidence="1">Belongs to the elongation factor P family.</text>
</comment>
<name>EFP_SALEP</name>
<protein>
    <recommendedName>
        <fullName evidence="1">Elongation factor P</fullName>
        <shortName evidence="1">EF-P</shortName>
    </recommendedName>
</protein>
<feature type="chain" id="PRO_1000096199" description="Elongation factor P">
    <location>
        <begin position="1"/>
        <end position="188"/>
    </location>
</feature>
<feature type="modified residue" description="N6-(3,6-diaminohexanoyl)-5-hydroxylysine" evidence="1">
    <location>
        <position position="34"/>
    </location>
</feature>
<evidence type="ECO:0000255" key="1">
    <source>
        <dbReference type="HAMAP-Rule" id="MF_00141"/>
    </source>
</evidence>
<dbReference type="EMBL" id="AM933172">
    <property type="protein sequence ID" value="CAR35664.1"/>
    <property type="molecule type" value="Genomic_DNA"/>
</dbReference>
<dbReference type="RefSeq" id="WP_000257282.1">
    <property type="nucleotide sequence ID" value="NC_011294.1"/>
</dbReference>
<dbReference type="SMR" id="B5R009"/>
<dbReference type="GeneID" id="66758562"/>
<dbReference type="KEGG" id="set:SEN4104"/>
<dbReference type="HOGENOM" id="CLU_074944_0_0_6"/>
<dbReference type="UniPathway" id="UPA00345"/>
<dbReference type="Proteomes" id="UP000000613">
    <property type="component" value="Chromosome"/>
</dbReference>
<dbReference type="GO" id="GO:0005829">
    <property type="term" value="C:cytosol"/>
    <property type="evidence" value="ECO:0007669"/>
    <property type="project" value="UniProtKB-ARBA"/>
</dbReference>
<dbReference type="GO" id="GO:0003746">
    <property type="term" value="F:translation elongation factor activity"/>
    <property type="evidence" value="ECO:0007669"/>
    <property type="project" value="UniProtKB-UniRule"/>
</dbReference>
<dbReference type="GO" id="GO:0043043">
    <property type="term" value="P:peptide biosynthetic process"/>
    <property type="evidence" value="ECO:0007669"/>
    <property type="project" value="InterPro"/>
</dbReference>
<dbReference type="CDD" id="cd04470">
    <property type="entry name" value="S1_EF-P_repeat_1"/>
    <property type="match status" value="1"/>
</dbReference>
<dbReference type="CDD" id="cd05794">
    <property type="entry name" value="S1_EF-P_repeat_2"/>
    <property type="match status" value="1"/>
</dbReference>
<dbReference type="FunFam" id="2.30.30.30:FF:000003">
    <property type="entry name" value="Elongation factor P"/>
    <property type="match status" value="1"/>
</dbReference>
<dbReference type="FunFam" id="2.40.50.140:FF:000004">
    <property type="entry name" value="Elongation factor P"/>
    <property type="match status" value="1"/>
</dbReference>
<dbReference type="FunFam" id="2.40.50.140:FF:000009">
    <property type="entry name" value="Elongation factor P"/>
    <property type="match status" value="1"/>
</dbReference>
<dbReference type="Gene3D" id="2.30.30.30">
    <property type="match status" value="1"/>
</dbReference>
<dbReference type="Gene3D" id="2.40.50.140">
    <property type="entry name" value="Nucleic acid-binding proteins"/>
    <property type="match status" value="2"/>
</dbReference>
<dbReference type="HAMAP" id="MF_00141">
    <property type="entry name" value="EF_P"/>
    <property type="match status" value="1"/>
</dbReference>
<dbReference type="InterPro" id="IPR015365">
    <property type="entry name" value="Elong-fact-P_C"/>
</dbReference>
<dbReference type="InterPro" id="IPR012340">
    <property type="entry name" value="NA-bd_OB-fold"/>
</dbReference>
<dbReference type="InterPro" id="IPR014722">
    <property type="entry name" value="Rib_uL2_dom2"/>
</dbReference>
<dbReference type="InterPro" id="IPR020599">
    <property type="entry name" value="Transl_elong_fac_P/YeiP"/>
</dbReference>
<dbReference type="InterPro" id="IPR013185">
    <property type="entry name" value="Transl_elong_KOW-like"/>
</dbReference>
<dbReference type="InterPro" id="IPR001059">
    <property type="entry name" value="Transl_elong_P/YeiP_cen"/>
</dbReference>
<dbReference type="InterPro" id="IPR013852">
    <property type="entry name" value="Transl_elong_P/YeiP_CS"/>
</dbReference>
<dbReference type="InterPro" id="IPR011768">
    <property type="entry name" value="Transl_elongation_fac_P"/>
</dbReference>
<dbReference type="InterPro" id="IPR008991">
    <property type="entry name" value="Translation_prot_SH3-like_sf"/>
</dbReference>
<dbReference type="NCBIfam" id="TIGR00038">
    <property type="entry name" value="efp"/>
    <property type="match status" value="1"/>
</dbReference>
<dbReference type="NCBIfam" id="NF001810">
    <property type="entry name" value="PRK00529.1"/>
    <property type="match status" value="1"/>
</dbReference>
<dbReference type="PANTHER" id="PTHR30053">
    <property type="entry name" value="ELONGATION FACTOR P"/>
    <property type="match status" value="1"/>
</dbReference>
<dbReference type="PANTHER" id="PTHR30053:SF12">
    <property type="entry name" value="ELONGATION FACTOR P (EF-P) FAMILY PROTEIN"/>
    <property type="match status" value="1"/>
</dbReference>
<dbReference type="Pfam" id="PF01132">
    <property type="entry name" value="EFP"/>
    <property type="match status" value="1"/>
</dbReference>
<dbReference type="Pfam" id="PF08207">
    <property type="entry name" value="EFP_N"/>
    <property type="match status" value="1"/>
</dbReference>
<dbReference type="Pfam" id="PF09285">
    <property type="entry name" value="Elong-fact-P_C"/>
    <property type="match status" value="1"/>
</dbReference>
<dbReference type="PIRSF" id="PIRSF005901">
    <property type="entry name" value="EF-P"/>
    <property type="match status" value="1"/>
</dbReference>
<dbReference type="SMART" id="SM01185">
    <property type="entry name" value="EFP"/>
    <property type="match status" value="1"/>
</dbReference>
<dbReference type="SMART" id="SM00841">
    <property type="entry name" value="Elong-fact-P_C"/>
    <property type="match status" value="1"/>
</dbReference>
<dbReference type="SUPFAM" id="SSF50249">
    <property type="entry name" value="Nucleic acid-binding proteins"/>
    <property type="match status" value="2"/>
</dbReference>
<dbReference type="SUPFAM" id="SSF50104">
    <property type="entry name" value="Translation proteins SH3-like domain"/>
    <property type="match status" value="1"/>
</dbReference>
<dbReference type="PROSITE" id="PS01275">
    <property type="entry name" value="EFP"/>
    <property type="match status" value="1"/>
</dbReference>
<proteinExistence type="inferred from homology"/>
<organism>
    <name type="scientific">Salmonella enteritidis PT4 (strain P125109)</name>
    <dbReference type="NCBI Taxonomy" id="550537"/>
    <lineage>
        <taxon>Bacteria</taxon>
        <taxon>Pseudomonadati</taxon>
        <taxon>Pseudomonadota</taxon>
        <taxon>Gammaproteobacteria</taxon>
        <taxon>Enterobacterales</taxon>
        <taxon>Enterobacteriaceae</taxon>
        <taxon>Salmonella</taxon>
    </lineage>
</organism>
<accession>B5R009</accession>
<keyword id="KW-0963">Cytoplasm</keyword>
<keyword id="KW-0251">Elongation factor</keyword>
<keyword id="KW-0379">Hydroxylation</keyword>
<keyword id="KW-0648">Protein biosynthesis</keyword>
<reference key="1">
    <citation type="journal article" date="2008" name="Genome Res.">
        <title>Comparative genome analysis of Salmonella enteritidis PT4 and Salmonella gallinarum 287/91 provides insights into evolutionary and host adaptation pathways.</title>
        <authorList>
            <person name="Thomson N.R."/>
            <person name="Clayton D.J."/>
            <person name="Windhorst D."/>
            <person name="Vernikos G."/>
            <person name="Davidson S."/>
            <person name="Churcher C."/>
            <person name="Quail M.A."/>
            <person name="Stevens M."/>
            <person name="Jones M.A."/>
            <person name="Watson M."/>
            <person name="Barron A."/>
            <person name="Layton A."/>
            <person name="Pickard D."/>
            <person name="Kingsley R.A."/>
            <person name="Bignell A."/>
            <person name="Clark L."/>
            <person name="Harris B."/>
            <person name="Ormond D."/>
            <person name="Abdellah Z."/>
            <person name="Brooks K."/>
            <person name="Cherevach I."/>
            <person name="Chillingworth T."/>
            <person name="Woodward J."/>
            <person name="Norberczak H."/>
            <person name="Lord A."/>
            <person name="Arrowsmith C."/>
            <person name="Jagels K."/>
            <person name="Moule S."/>
            <person name="Mungall K."/>
            <person name="Saunders M."/>
            <person name="Whitehead S."/>
            <person name="Chabalgoity J.A."/>
            <person name="Maskell D."/>
            <person name="Humphreys T."/>
            <person name="Roberts M."/>
            <person name="Barrow P.A."/>
            <person name="Dougan G."/>
            <person name="Parkhill J."/>
        </authorList>
    </citation>
    <scope>NUCLEOTIDE SEQUENCE [LARGE SCALE GENOMIC DNA]</scope>
    <source>
        <strain>P125109</strain>
    </source>
</reference>
<gene>
    <name evidence="1" type="primary">efp</name>
    <name type="ordered locus">SEN4104</name>
</gene>